<name>ATG5_YARLI</name>
<protein>
    <recommendedName>
        <fullName>Autophagy protein 5</fullName>
    </recommendedName>
</protein>
<accession>Q6C4Q6</accession>
<sequence length="256" mass="28557">MGDKRGLVLDETATYGTVDRLTGWFRNVCIQLPEGTLLVLCCCAVEQRIGVTTFSIGLSYDLLTGLDPSNPDTVQSPWILTLQVDQKEEYPKGLLLRIPTKQTLKDYWIHQLKEACVSRDGNANRVMSLSNANSQKMWDSLVSHDFKTFWSIMTTILPREKDSGAIRSLPIKVYLPMSNQCIAAIVKPETDDGKLTTIGQSLHSHLPTFFPSETKPVVARAVVHGVEVPLNAVLANLYYMAMYPDGFLHISLVMIN</sequence>
<keyword id="KW-0072">Autophagy</keyword>
<keyword id="KW-1017">Isopeptide bond</keyword>
<keyword id="KW-0472">Membrane</keyword>
<keyword id="KW-0653">Protein transport</keyword>
<keyword id="KW-1185">Reference proteome</keyword>
<keyword id="KW-0813">Transport</keyword>
<keyword id="KW-0832">Ubl conjugation</keyword>
<proteinExistence type="inferred from homology"/>
<dbReference type="EMBL" id="CR382131">
    <property type="protein sequence ID" value="CAG79955.2"/>
    <property type="molecule type" value="Genomic_DNA"/>
</dbReference>
<dbReference type="RefSeq" id="XP_504356.2">
    <property type="nucleotide sequence ID" value="XM_504356.2"/>
</dbReference>
<dbReference type="SMR" id="Q6C4Q6"/>
<dbReference type="FunCoup" id="Q6C4Q6">
    <property type="interactions" value="344"/>
</dbReference>
<dbReference type="STRING" id="284591.Q6C4Q6"/>
<dbReference type="EnsemblFungi" id="CAG79955">
    <property type="protein sequence ID" value="CAG79955"/>
    <property type="gene ID" value="YALI0_E24519g"/>
</dbReference>
<dbReference type="KEGG" id="yli:2912552"/>
<dbReference type="VEuPathDB" id="FungiDB:YALI0_E24519g"/>
<dbReference type="HOGENOM" id="CLU_1086668_0_0_1"/>
<dbReference type="InParanoid" id="Q6C4Q6"/>
<dbReference type="OMA" id="SIQKAVW"/>
<dbReference type="OrthoDB" id="68298at4891"/>
<dbReference type="Proteomes" id="UP000001300">
    <property type="component" value="Chromosome E"/>
</dbReference>
<dbReference type="GO" id="GO:0034274">
    <property type="term" value="C:Atg12-Atg5-Atg16 complex"/>
    <property type="evidence" value="ECO:0000318"/>
    <property type="project" value="GO_Central"/>
</dbReference>
<dbReference type="GO" id="GO:0005776">
    <property type="term" value="C:autophagosome"/>
    <property type="evidence" value="ECO:0000318"/>
    <property type="project" value="GO_Central"/>
</dbReference>
<dbReference type="GO" id="GO:0061908">
    <property type="term" value="C:phagophore"/>
    <property type="evidence" value="ECO:0000318"/>
    <property type="project" value="GO_Central"/>
</dbReference>
<dbReference type="GO" id="GO:0034045">
    <property type="term" value="C:phagophore assembly site membrane"/>
    <property type="evidence" value="ECO:0000318"/>
    <property type="project" value="GO_Central"/>
</dbReference>
<dbReference type="GO" id="GO:0035973">
    <property type="term" value="P:aggrephagy"/>
    <property type="evidence" value="ECO:0000318"/>
    <property type="project" value="GO_Central"/>
</dbReference>
<dbReference type="GO" id="GO:0000045">
    <property type="term" value="P:autophagosome assembly"/>
    <property type="evidence" value="ECO:0000318"/>
    <property type="project" value="GO_Central"/>
</dbReference>
<dbReference type="GO" id="GO:0006995">
    <property type="term" value="P:cellular response to nitrogen starvation"/>
    <property type="evidence" value="ECO:0000318"/>
    <property type="project" value="GO_Central"/>
</dbReference>
<dbReference type="GO" id="GO:0000423">
    <property type="term" value="P:mitophagy"/>
    <property type="evidence" value="ECO:0000318"/>
    <property type="project" value="GO_Central"/>
</dbReference>
<dbReference type="GO" id="GO:0034727">
    <property type="term" value="P:piecemeal microautophagy of the nucleus"/>
    <property type="evidence" value="ECO:0000318"/>
    <property type="project" value="GO_Central"/>
</dbReference>
<dbReference type="GO" id="GO:0015031">
    <property type="term" value="P:protein transport"/>
    <property type="evidence" value="ECO:0007669"/>
    <property type="project" value="UniProtKB-KW"/>
</dbReference>
<dbReference type="Gene3D" id="1.10.246.190">
    <property type="entry name" value="Autophagy protein Apg5, helix rich domain"/>
    <property type="match status" value="1"/>
</dbReference>
<dbReference type="Gene3D" id="3.10.20.90">
    <property type="entry name" value="Phosphatidylinositol 3-kinase Catalytic Subunit, Chain A, domain 1"/>
    <property type="match status" value="1"/>
</dbReference>
<dbReference type="InterPro" id="IPR007239">
    <property type="entry name" value="Atg5"/>
</dbReference>
<dbReference type="InterPro" id="IPR048940">
    <property type="entry name" value="ATG5_HBR"/>
</dbReference>
<dbReference type="InterPro" id="IPR042526">
    <property type="entry name" value="Atg5_HR"/>
</dbReference>
<dbReference type="InterPro" id="IPR048318">
    <property type="entry name" value="ATG5_UblB"/>
</dbReference>
<dbReference type="PANTHER" id="PTHR13040">
    <property type="entry name" value="AUTOPHAGY PROTEIN 5"/>
    <property type="match status" value="1"/>
</dbReference>
<dbReference type="PANTHER" id="PTHR13040:SF2">
    <property type="entry name" value="AUTOPHAGY PROTEIN 5"/>
    <property type="match status" value="1"/>
</dbReference>
<dbReference type="Pfam" id="PF20637">
    <property type="entry name" value="ATG5_HBR"/>
    <property type="match status" value="1"/>
</dbReference>
<dbReference type="Pfam" id="PF04106">
    <property type="entry name" value="ATG5_UblB"/>
    <property type="match status" value="1"/>
</dbReference>
<comment type="function">
    <text evidence="1">Involved in cytoplasm to vacuole transport (Cvt) and autophagic vesicle formation. Autophagy is essential for maintenance of amino acid levels and protein synthesis under nitrogen starvation. Required for selective autophagic degradation of the nucleus (nucleophagy). Also required for mitophagy, which eliminates defective or superfluous mitochondria in order to fulfill cellular energy requirements and prevent excess ROS production. Conjugation with ATG12, through a ubiquitin-like conjugating system involving ATG7 as an E1-like activating enzyme and ATG10 as an E2-like conjugating enzyme, is essential for its function. The ATG12-ATG5 conjugate acts as an E3-like enzyme which is required for lipidation of ATG8 and ATG8 association to the vesicle membranes (By similarity).</text>
</comment>
<comment type="subunit">
    <text evidence="1">Conjugated with ATG12.</text>
</comment>
<comment type="subcellular location">
    <subcellularLocation>
        <location evidence="1">Preautophagosomal structure membrane</location>
        <topology evidence="1">Peripheral membrane protein</topology>
    </subcellularLocation>
</comment>
<comment type="PTM">
    <text evidence="1">Conjugated to ATG12; which is essential for autophagy.</text>
</comment>
<comment type="similarity">
    <text evidence="2">Belongs to the ATG5 family.</text>
</comment>
<gene>
    <name type="primary">ATG5</name>
    <name type="ordered locus">YALI0E24519g</name>
</gene>
<feature type="chain" id="PRO_0000219009" description="Autophagy protein 5">
    <location>
        <begin position="1"/>
        <end position="256"/>
    </location>
</feature>
<feature type="cross-link" description="Glycyl lysine isopeptide (Lys-Gly) (interchain with G-Cter in ATG12)" evidence="1">
    <location>
        <position position="113"/>
    </location>
</feature>
<reference key="1">
    <citation type="journal article" date="2004" name="Nature">
        <title>Genome evolution in yeasts.</title>
        <authorList>
            <person name="Dujon B."/>
            <person name="Sherman D."/>
            <person name="Fischer G."/>
            <person name="Durrens P."/>
            <person name="Casaregola S."/>
            <person name="Lafontaine I."/>
            <person name="de Montigny J."/>
            <person name="Marck C."/>
            <person name="Neuveglise C."/>
            <person name="Talla E."/>
            <person name="Goffard N."/>
            <person name="Frangeul L."/>
            <person name="Aigle M."/>
            <person name="Anthouard V."/>
            <person name="Babour A."/>
            <person name="Barbe V."/>
            <person name="Barnay S."/>
            <person name="Blanchin S."/>
            <person name="Beckerich J.-M."/>
            <person name="Beyne E."/>
            <person name="Bleykasten C."/>
            <person name="Boisrame A."/>
            <person name="Boyer J."/>
            <person name="Cattolico L."/>
            <person name="Confanioleri F."/>
            <person name="de Daruvar A."/>
            <person name="Despons L."/>
            <person name="Fabre E."/>
            <person name="Fairhead C."/>
            <person name="Ferry-Dumazet H."/>
            <person name="Groppi A."/>
            <person name="Hantraye F."/>
            <person name="Hennequin C."/>
            <person name="Jauniaux N."/>
            <person name="Joyet P."/>
            <person name="Kachouri R."/>
            <person name="Kerrest A."/>
            <person name="Koszul R."/>
            <person name="Lemaire M."/>
            <person name="Lesur I."/>
            <person name="Ma L."/>
            <person name="Muller H."/>
            <person name="Nicaud J.-M."/>
            <person name="Nikolski M."/>
            <person name="Oztas S."/>
            <person name="Ozier-Kalogeropoulos O."/>
            <person name="Pellenz S."/>
            <person name="Potier S."/>
            <person name="Richard G.-F."/>
            <person name="Straub M.-L."/>
            <person name="Suleau A."/>
            <person name="Swennen D."/>
            <person name="Tekaia F."/>
            <person name="Wesolowski-Louvel M."/>
            <person name="Westhof E."/>
            <person name="Wirth B."/>
            <person name="Zeniou-Meyer M."/>
            <person name="Zivanovic Y."/>
            <person name="Bolotin-Fukuhara M."/>
            <person name="Thierry A."/>
            <person name="Bouchier C."/>
            <person name="Caudron B."/>
            <person name="Scarpelli C."/>
            <person name="Gaillardin C."/>
            <person name="Weissenbach J."/>
            <person name="Wincker P."/>
            <person name="Souciet J.-L."/>
        </authorList>
    </citation>
    <scope>NUCLEOTIDE SEQUENCE [LARGE SCALE GENOMIC DNA]</scope>
    <source>
        <strain>CLIB 122 / E 150</strain>
    </source>
</reference>
<evidence type="ECO:0000250" key="1"/>
<evidence type="ECO:0000305" key="2"/>
<organism>
    <name type="scientific">Yarrowia lipolytica (strain CLIB 122 / E 150)</name>
    <name type="common">Yeast</name>
    <name type="synonym">Candida lipolytica</name>
    <dbReference type="NCBI Taxonomy" id="284591"/>
    <lineage>
        <taxon>Eukaryota</taxon>
        <taxon>Fungi</taxon>
        <taxon>Dikarya</taxon>
        <taxon>Ascomycota</taxon>
        <taxon>Saccharomycotina</taxon>
        <taxon>Dipodascomycetes</taxon>
        <taxon>Dipodascales</taxon>
        <taxon>Dipodascales incertae sedis</taxon>
        <taxon>Yarrowia</taxon>
    </lineage>
</organism>